<feature type="chain" id="PRO_1000144988" description="Protein translocase subunit SecA">
    <location>
        <begin position="1"/>
        <end position="1027"/>
    </location>
</feature>
<feature type="region of interest" description="Disordered" evidence="2">
    <location>
        <begin position="981"/>
        <end position="1027"/>
    </location>
</feature>
<feature type="binding site" evidence="1">
    <location>
        <position position="143"/>
    </location>
    <ligand>
        <name>ATP</name>
        <dbReference type="ChEBI" id="CHEBI:30616"/>
    </ligand>
</feature>
<feature type="binding site" evidence="1">
    <location>
        <begin position="161"/>
        <end position="165"/>
    </location>
    <ligand>
        <name>ATP</name>
        <dbReference type="ChEBI" id="CHEBI:30616"/>
    </ligand>
</feature>
<feature type="binding site" evidence="1">
    <location>
        <position position="661"/>
    </location>
    <ligand>
        <name>ATP</name>
        <dbReference type="ChEBI" id="CHEBI:30616"/>
    </ligand>
</feature>
<feature type="binding site" evidence="1">
    <location>
        <position position="1011"/>
    </location>
    <ligand>
        <name>Zn(2+)</name>
        <dbReference type="ChEBI" id="CHEBI:29105"/>
    </ligand>
</feature>
<feature type="binding site" evidence="1">
    <location>
        <position position="1013"/>
    </location>
    <ligand>
        <name>Zn(2+)</name>
        <dbReference type="ChEBI" id="CHEBI:29105"/>
    </ligand>
</feature>
<feature type="binding site" evidence="1">
    <location>
        <position position="1022"/>
    </location>
    <ligand>
        <name>Zn(2+)</name>
        <dbReference type="ChEBI" id="CHEBI:29105"/>
    </ligand>
</feature>
<feature type="binding site" evidence="1">
    <location>
        <position position="1023"/>
    </location>
    <ligand>
        <name>Zn(2+)</name>
        <dbReference type="ChEBI" id="CHEBI:29105"/>
    </ligand>
</feature>
<keyword id="KW-0067">ATP-binding</keyword>
<keyword id="KW-0997">Cell inner membrane</keyword>
<keyword id="KW-1003">Cell membrane</keyword>
<keyword id="KW-0963">Cytoplasm</keyword>
<keyword id="KW-0472">Membrane</keyword>
<keyword id="KW-0479">Metal-binding</keyword>
<keyword id="KW-0547">Nucleotide-binding</keyword>
<keyword id="KW-0653">Protein transport</keyword>
<keyword id="KW-1278">Translocase</keyword>
<keyword id="KW-0811">Translocation</keyword>
<keyword id="KW-0813">Transport</keyword>
<keyword id="KW-0862">Zinc</keyword>
<protein>
    <recommendedName>
        <fullName evidence="1">Protein translocase subunit SecA</fullName>
        <ecNumber evidence="1">7.4.2.8</ecNumber>
    </recommendedName>
</protein>
<accession>B3ECJ8</accession>
<dbReference type="EC" id="7.4.2.8" evidence="1"/>
<dbReference type="EMBL" id="CP001097">
    <property type="protein sequence ID" value="ACD90273.1"/>
    <property type="molecule type" value="Genomic_DNA"/>
</dbReference>
<dbReference type="RefSeq" id="WP_012466150.1">
    <property type="nucleotide sequence ID" value="NC_010803.1"/>
</dbReference>
<dbReference type="SMR" id="B3ECJ8"/>
<dbReference type="STRING" id="290315.Clim_1206"/>
<dbReference type="KEGG" id="cli:Clim_1206"/>
<dbReference type="eggNOG" id="COG0653">
    <property type="taxonomic scope" value="Bacteria"/>
</dbReference>
<dbReference type="HOGENOM" id="CLU_005314_0_0_10"/>
<dbReference type="OrthoDB" id="9805579at2"/>
<dbReference type="Proteomes" id="UP000008841">
    <property type="component" value="Chromosome"/>
</dbReference>
<dbReference type="GO" id="GO:0031522">
    <property type="term" value="C:cell envelope Sec protein transport complex"/>
    <property type="evidence" value="ECO:0007669"/>
    <property type="project" value="TreeGrafter"/>
</dbReference>
<dbReference type="GO" id="GO:0005829">
    <property type="term" value="C:cytosol"/>
    <property type="evidence" value="ECO:0007669"/>
    <property type="project" value="TreeGrafter"/>
</dbReference>
<dbReference type="GO" id="GO:0005886">
    <property type="term" value="C:plasma membrane"/>
    <property type="evidence" value="ECO:0007669"/>
    <property type="project" value="UniProtKB-SubCell"/>
</dbReference>
<dbReference type="GO" id="GO:0005524">
    <property type="term" value="F:ATP binding"/>
    <property type="evidence" value="ECO:0007669"/>
    <property type="project" value="UniProtKB-UniRule"/>
</dbReference>
<dbReference type="GO" id="GO:0046872">
    <property type="term" value="F:metal ion binding"/>
    <property type="evidence" value="ECO:0007669"/>
    <property type="project" value="UniProtKB-KW"/>
</dbReference>
<dbReference type="GO" id="GO:0008564">
    <property type="term" value="F:protein-exporting ATPase activity"/>
    <property type="evidence" value="ECO:0007669"/>
    <property type="project" value="UniProtKB-EC"/>
</dbReference>
<dbReference type="GO" id="GO:0065002">
    <property type="term" value="P:intracellular protein transmembrane transport"/>
    <property type="evidence" value="ECO:0007669"/>
    <property type="project" value="UniProtKB-UniRule"/>
</dbReference>
<dbReference type="GO" id="GO:0017038">
    <property type="term" value="P:protein import"/>
    <property type="evidence" value="ECO:0007669"/>
    <property type="project" value="InterPro"/>
</dbReference>
<dbReference type="GO" id="GO:0006605">
    <property type="term" value="P:protein targeting"/>
    <property type="evidence" value="ECO:0007669"/>
    <property type="project" value="UniProtKB-UniRule"/>
</dbReference>
<dbReference type="GO" id="GO:0043952">
    <property type="term" value="P:protein transport by the Sec complex"/>
    <property type="evidence" value="ECO:0007669"/>
    <property type="project" value="TreeGrafter"/>
</dbReference>
<dbReference type="CDD" id="cd17928">
    <property type="entry name" value="DEXDc_SecA"/>
    <property type="match status" value="1"/>
</dbReference>
<dbReference type="CDD" id="cd18803">
    <property type="entry name" value="SF2_C_secA"/>
    <property type="match status" value="1"/>
</dbReference>
<dbReference type="FunFam" id="3.40.50.300:FF:000246">
    <property type="entry name" value="Preprotein translocase subunit SecA"/>
    <property type="match status" value="1"/>
</dbReference>
<dbReference type="FunFam" id="3.40.50.300:FF:000694">
    <property type="entry name" value="Preprotein translocase subunit SecA"/>
    <property type="match status" value="1"/>
</dbReference>
<dbReference type="Gene3D" id="3.10.450.50">
    <property type="match status" value="1"/>
</dbReference>
<dbReference type="Gene3D" id="1.10.3060.10">
    <property type="entry name" value="Helical scaffold and wing domains of SecA"/>
    <property type="match status" value="1"/>
</dbReference>
<dbReference type="Gene3D" id="3.40.50.300">
    <property type="entry name" value="P-loop containing nucleotide triphosphate hydrolases"/>
    <property type="match status" value="3"/>
</dbReference>
<dbReference type="Gene3D" id="3.90.1440.10">
    <property type="entry name" value="SecA, preprotein cross-linking domain"/>
    <property type="match status" value="1"/>
</dbReference>
<dbReference type="HAMAP" id="MF_01382">
    <property type="entry name" value="SecA"/>
    <property type="match status" value="1"/>
</dbReference>
<dbReference type="InterPro" id="IPR014001">
    <property type="entry name" value="Helicase_ATP-bd"/>
</dbReference>
<dbReference type="InterPro" id="IPR001650">
    <property type="entry name" value="Helicase_C-like"/>
</dbReference>
<dbReference type="InterPro" id="IPR027417">
    <property type="entry name" value="P-loop_NTPase"/>
</dbReference>
<dbReference type="InterPro" id="IPR004027">
    <property type="entry name" value="SEC_C_motif"/>
</dbReference>
<dbReference type="InterPro" id="IPR000185">
    <property type="entry name" value="SecA"/>
</dbReference>
<dbReference type="InterPro" id="IPR020937">
    <property type="entry name" value="SecA_CS"/>
</dbReference>
<dbReference type="InterPro" id="IPR011115">
    <property type="entry name" value="SecA_DEAD"/>
</dbReference>
<dbReference type="InterPro" id="IPR014018">
    <property type="entry name" value="SecA_motor_DEAD"/>
</dbReference>
<dbReference type="InterPro" id="IPR011130">
    <property type="entry name" value="SecA_preprotein_X-link_dom"/>
</dbReference>
<dbReference type="InterPro" id="IPR044722">
    <property type="entry name" value="SecA_SF2_C"/>
</dbReference>
<dbReference type="InterPro" id="IPR011116">
    <property type="entry name" value="SecA_Wing/Scaffold"/>
</dbReference>
<dbReference type="InterPro" id="IPR036266">
    <property type="entry name" value="SecA_Wing/Scaffold_sf"/>
</dbReference>
<dbReference type="InterPro" id="IPR036670">
    <property type="entry name" value="SecA_X-link_sf"/>
</dbReference>
<dbReference type="NCBIfam" id="TIGR00963">
    <property type="entry name" value="secA"/>
    <property type="match status" value="1"/>
</dbReference>
<dbReference type="PANTHER" id="PTHR30612:SF0">
    <property type="entry name" value="CHLOROPLAST PROTEIN-TRANSPORTING ATPASE"/>
    <property type="match status" value="1"/>
</dbReference>
<dbReference type="PANTHER" id="PTHR30612">
    <property type="entry name" value="SECA INNER MEMBRANE COMPONENT OF SEC PROTEIN SECRETION SYSTEM"/>
    <property type="match status" value="1"/>
</dbReference>
<dbReference type="Pfam" id="PF21090">
    <property type="entry name" value="P-loop_SecA"/>
    <property type="match status" value="2"/>
</dbReference>
<dbReference type="Pfam" id="PF02810">
    <property type="entry name" value="SEC-C"/>
    <property type="match status" value="1"/>
</dbReference>
<dbReference type="Pfam" id="PF07517">
    <property type="entry name" value="SecA_DEAD"/>
    <property type="match status" value="1"/>
</dbReference>
<dbReference type="Pfam" id="PF01043">
    <property type="entry name" value="SecA_PP_bind"/>
    <property type="match status" value="1"/>
</dbReference>
<dbReference type="Pfam" id="PF07516">
    <property type="entry name" value="SecA_SW"/>
    <property type="match status" value="1"/>
</dbReference>
<dbReference type="PRINTS" id="PR00906">
    <property type="entry name" value="SECA"/>
</dbReference>
<dbReference type="SMART" id="SM00957">
    <property type="entry name" value="SecA_DEAD"/>
    <property type="match status" value="1"/>
</dbReference>
<dbReference type="SMART" id="SM00958">
    <property type="entry name" value="SecA_PP_bind"/>
    <property type="match status" value="1"/>
</dbReference>
<dbReference type="SUPFAM" id="SSF81886">
    <property type="entry name" value="Helical scaffold and wing domains of SecA"/>
    <property type="match status" value="1"/>
</dbReference>
<dbReference type="SUPFAM" id="SSF52540">
    <property type="entry name" value="P-loop containing nucleoside triphosphate hydrolases"/>
    <property type="match status" value="2"/>
</dbReference>
<dbReference type="SUPFAM" id="SSF81767">
    <property type="entry name" value="Pre-protein crosslinking domain of SecA"/>
    <property type="match status" value="1"/>
</dbReference>
<dbReference type="PROSITE" id="PS01312">
    <property type="entry name" value="SECA"/>
    <property type="match status" value="1"/>
</dbReference>
<dbReference type="PROSITE" id="PS51196">
    <property type="entry name" value="SECA_MOTOR_DEAD"/>
    <property type="match status" value="1"/>
</dbReference>
<sequence length="1027" mass="117012">MLKIFEKIFGSKHDKDIKKIQPVIQRINELQLSFQSLSDDGLKEMGLQLRSTARGALRPLEEKKQELLSKLSTPDIPLEEADRINDELDTLSEEYEKATVSVLEEILPDTFALVKDTCRRLKGHVYTVMGHDMTWDMVPYDVQLIGGMVLHSGRISEMATGEGKTLVSTLPIFLNALTGRGVHVVTVNDYLAQRDKEWMTPVFEYHGLSVGVILNTMHPFERREQYRCDITYGTNNEFGFDYLRDNMAGSVEEMVQRDFYFAIVDEVDSVLIDEARTPLIISGPVPNADNSKFQEIKPWIDQLVRNQQQLVASYLTDAEKILKTKPGDFDAGLALLRVKRGQPKNSRFIKMLSQQGLAKLVQGTENEFLKDNASRMHEVDDELFYAVDEKAGTIDLTDKGRDFLSRLSHQDSDIFLLPDVGSEIAIIESNASLSAAEKVKQKDAVYRLFADRSERLHNISQLLKAFSLFERDDEYVVQDGKVMIVDEFTGRILPGRRYSDGLHQAIEAKENVRIEGETQTMATITIQNFFRLYKKLAGMTGTAETEASEFYEIYKLDVVVIPTNRPIVRKDMDDLVYKTRREKYNAVVEKVEELQKKGQPVLVGTASVEVSETLSRMLRGKRIAHSVLNAKQHDREAEIVAAAGQKGAVTIATNMAGRGTDIKLGSGVRELGGLFILGSERHESRRIDRQLRGRAGRQGDPGESVFFVSLEDELMRLFGSERVISVMDRLGHEEGDVIEHTMITKSIERAQKKVEEQNFAIRKRLLEYDDVLNQQRDVIYTRRKNGLQKERLTSDIFDLLRDYCDMVVKKYEKAFDPEELEERLLRELSVEFRPESGLFDREGAKGIADKLYETALAFYSRKEKEIPEEIMGQIEKYAVLSVIDKKWREHLREIDSLREGINLRAYGQKDPLLEYKQEAFRLFVVLLQEIELETLSLAFKLFPVNPDEAREIEARQKKEALRQEKLVAQHQAAESIYQHIEESGTSNADNAGDNGPQTVIAEKKPGRNDLCPCGSGKKYKNCHGQQP</sequence>
<organism>
    <name type="scientific">Chlorobium limicola (strain DSM 245 / NBRC 103803 / 6330)</name>
    <dbReference type="NCBI Taxonomy" id="290315"/>
    <lineage>
        <taxon>Bacteria</taxon>
        <taxon>Pseudomonadati</taxon>
        <taxon>Chlorobiota</taxon>
        <taxon>Chlorobiia</taxon>
        <taxon>Chlorobiales</taxon>
        <taxon>Chlorobiaceae</taxon>
        <taxon>Chlorobium/Pelodictyon group</taxon>
        <taxon>Chlorobium</taxon>
    </lineage>
</organism>
<reference key="1">
    <citation type="submission" date="2008-05" db="EMBL/GenBank/DDBJ databases">
        <title>Complete sequence of Chlorobium limicola DSM 245.</title>
        <authorList>
            <consortium name="US DOE Joint Genome Institute"/>
            <person name="Lucas S."/>
            <person name="Copeland A."/>
            <person name="Lapidus A."/>
            <person name="Glavina del Rio T."/>
            <person name="Dalin E."/>
            <person name="Tice H."/>
            <person name="Bruce D."/>
            <person name="Goodwin L."/>
            <person name="Pitluck S."/>
            <person name="Schmutz J."/>
            <person name="Larimer F."/>
            <person name="Land M."/>
            <person name="Hauser L."/>
            <person name="Kyrpides N."/>
            <person name="Ovchinnikova G."/>
            <person name="Zhao F."/>
            <person name="Li T."/>
            <person name="Liu Z."/>
            <person name="Overmann J."/>
            <person name="Bryant D.A."/>
            <person name="Richardson P."/>
        </authorList>
    </citation>
    <scope>NUCLEOTIDE SEQUENCE [LARGE SCALE GENOMIC DNA]</scope>
    <source>
        <strain>DSM 245 / NBRC 103803 / 6330</strain>
    </source>
</reference>
<proteinExistence type="inferred from homology"/>
<comment type="function">
    <text evidence="1">Part of the Sec protein translocase complex. Interacts with the SecYEG preprotein conducting channel. Has a central role in coupling the hydrolysis of ATP to the transfer of proteins into and across the cell membrane, serving as an ATP-driven molecular motor driving the stepwise translocation of polypeptide chains across the membrane.</text>
</comment>
<comment type="catalytic activity">
    <reaction evidence="1">
        <text>ATP + H2O + cellular proteinSide 1 = ADP + phosphate + cellular proteinSide 2.</text>
        <dbReference type="EC" id="7.4.2.8"/>
    </reaction>
</comment>
<comment type="cofactor">
    <cofactor evidence="1">
        <name>Zn(2+)</name>
        <dbReference type="ChEBI" id="CHEBI:29105"/>
    </cofactor>
    <text evidence="1">May bind 1 zinc ion per subunit.</text>
</comment>
<comment type="subunit">
    <text evidence="1">Monomer and homodimer. Part of the essential Sec protein translocation apparatus which comprises SecA, SecYEG and auxiliary proteins SecDF. Other proteins may also be involved.</text>
</comment>
<comment type="subcellular location">
    <subcellularLocation>
        <location evidence="1">Cell inner membrane</location>
        <topology evidence="1">Peripheral membrane protein</topology>
        <orientation evidence="1">Cytoplasmic side</orientation>
    </subcellularLocation>
    <subcellularLocation>
        <location evidence="1">Cytoplasm</location>
    </subcellularLocation>
    <text evidence="1">Distribution is 50-50.</text>
</comment>
<comment type="similarity">
    <text evidence="1">Belongs to the SecA family.</text>
</comment>
<evidence type="ECO:0000255" key="1">
    <source>
        <dbReference type="HAMAP-Rule" id="MF_01382"/>
    </source>
</evidence>
<evidence type="ECO:0000256" key="2">
    <source>
        <dbReference type="SAM" id="MobiDB-lite"/>
    </source>
</evidence>
<name>SECA_CHLL2</name>
<gene>
    <name evidence="1" type="primary">secA</name>
    <name type="ordered locus">Clim_1206</name>
</gene>